<comment type="function">
    <text evidence="1">DNA-dependent RNA polymerase catalyzes the transcription of DNA into RNA using the four ribonucleoside triphosphates as substrates.</text>
</comment>
<comment type="catalytic activity">
    <reaction evidence="1">
        <text>RNA(n) + a ribonucleoside 5'-triphosphate = RNA(n+1) + diphosphate</text>
        <dbReference type="Rhea" id="RHEA:21248"/>
        <dbReference type="Rhea" id="RHEA-COMP:14527"/>
        <dbReference type="Rhea" id="RHEA-COMP:17342"/>
        <dbReference type="ChEBI" id="CHEBI:33019"/>
        <dbReference type="ChEBI" id="CHEBI:61557"/>
        <dbReference type="ChEBI" id="CHEBI:140395"/>
        <dbReference type="EC" id="2.7.7.6"/>
    </reaction>
</comment>
<comment type="subunit">
    <text evidence="1">Homodimer. The RNAP catalytic core consists of 2 alpha, 1 beta, 1 beta' and 1 omega subunit. When a sigma factor is associated with the core the holoenzyme is formed, which can initiate transcription.</text>
</comment>
<comment type="domain">
    <text evidence="1">The N-terminal domain is essential for RNAP assembly and basal transcription, whereas the C-terminal domain is involved in interaction with transcriptional regulators and with upstream promoter elements.</text>
</comment>
<comment type="similarity">
    <text evidence="1">Belongs to the RNA polymerase alpha chain family.</text>
</comment>
<reference key="1">
    <citation type="journal article" date="2007" name="PLoS Genet.">
        <title>Genome analysis of Minibacterium massiliensis highlights the convergent evolution of water-living bacteria.</title>
        <authorList>
            <person name="Audic S."/>
            <person name="Robert C."/>
            <person name="Campagna B."/>
            <person name="Parinello H."/>
            <person name="Claverie J.-M."/>
            <person name="Raoult D."/>
            <person name="Drancourt M."/>
        </authorList>
    </citation>
    <scope>NUCLEOTIDE SEQUENCE [LARGE SCALE GENOMIC DNA]</scope>
    <source>
        <strain>Marseille</strain>
    </source>
</reference>
<keyword id="KW-0240">DNA-directed RNA polymerase</keyword>
<keyword id="KW-0548">Nucleotidyltransferase</keyword>
<keyword id="KW-0804">Transcription</keyword>
<keyword id="KW-0808">Transferase</keyword>
<dbReference type="EC" id="2.7.7.6" evidence="1"/>
<dbReference type="EMBL" id="CP000269">
    <property type="protein sequence ID" value="ABR88933.1"/>
    <property type="molecule type" value="Genomic_DNA"/>
</dbReference>
<dbReference type="RefSeq" id="WP_012081228.1">
    <property type="nucleotide sequence ID" value="NC_009659.1"/>
</dbReference>
<dbReference type="SMR" id="A6T3H8"/>
<dbReference type="STRING" id="375286.mma_3385"/>
<dbReference type="KEGG" id="mms:mma_3385"/>
<dbReference type="eggNOG" id="COG0202">
    <property type="taxonomic scope" value="Bacteria"/>
</dbReference>
<dbReference type="HOGENOM" id="CLU_053084_0_0_4"/>
<dbReference type="OrthoDB" id="9805706at2"/>
<dbReference type="Proteomes" id="UP000006388">
    <property type="component" value="Chromosome"/>
</dbReference>
<dbReference type="GO" id="GO:0005737">
    <property type="term" value="C:cytoplasm"/>
    <property type="evidence" value="ECO:0007669"/>
    <property type="project" value="UniProtKB-ARBA"/>
</dbReference>
<dbReference type="GO" id="GO:0000428">
    <property type="term" value="C:DNA-directed RNA polymerase complex"/>
    <property type="evidence" value="ECO:0007669"/>
    <property type="project" value="UniProtKB-KW"/>
</dbReference>
<dbReference type="GO" id="GO:0003677">
    <property type="term" value="F:DNA binding"/>
    <property type="evidence" value="ECO:0007669"/>
    <property type="project" value="UniProtKB-UniRule"/>
</dbReference>
<dbReference type="GO" id="GO:0003899">
    <property type="term" value="F:DNA-directed RNA polymerase activity"/>
    <property type="evidence" value="ECO:0007669"/>
    <property type="project" value="UniProtKB-UniRule"/>
</dbReference>
<dbReference type="GO" id="GO:0046983">
    <property type="term" value="F:protein dimerization activity"/>
    <property type="evidence" value="ECO:0007669"/>
    <property type="project" value="InterPro"/>
</dbReference>
<dbReference type="GO" id="GO:0006351">
    <property type="term" value="P:DNA-templated transcription"/>
    <property type="evidence" value="ECO:0007669"/>
    <property type="project" value="UniProtKB-UniRule"/>
</dbReference>
<dbReference type="CDD" id="cd06928">
    <property type="entry name" value="RNAP_alpha_NTD"/>
    <property type="match status" value="1"/>
</dbReference>
<dbReference type="FunFam" id="1.10.150.20:FF:000001">
    <property type="entry name" value="DNA-directed RNA polymerase subunit alpha"/>
    <property type="match status" value="1"/>
</dbReference>
<dbReference type="FunFam" id="2.170.120.12:FF:000001">
    <property type="entry name" value="DNA-directed RNA polymerase subunit alpha"/>
    <property type="match status" value="1"/>
</dbReference>
<dbReference type="Gene3D" id="1.10.150.20">
    <property type="entry name" value="5' to 3' exonuclease, C-terminal subdomain"/>
    <property type="match status" value="1"/>
</dbReference>
<dbReference type="Gene3D" id="2.170.120.12">
    <property type="entry name" value="DNA-directed RNA polymerase, insert domain"/>
    <property type="match status" value="1"/>
</dbReference>
<dbReference type="Gene3D" id="3.30.1360.10">
    <property type="entry name" value="RNA polymerase, RBP11-like subunit"/>
    <property type="match status" value="1"/>
</dbReference>
<dbReference type="HAMAP" id="MF_00059">
    <property type="entry name" value="RNApol_bact_RpoA"/>
    <property type="match status" value="1"/>
</dbReference>
<dbReference type="InterPro" id="IPR011262">
    <property type="entry name" value="DNA-dir_RNA_pol_insert"/>
</dbReference>
<dbReference type="InterPro" id="IPR011263">
    <property type="entry name" value="DNA-dir_RNA_pol_RpoA/D/Rpb3"/>
</dbReference>
<dbReference type="InterPro" id="IPR011773">
    <property type="entry name" value="DNA-dir_RpoA"/>
</dbReference>
<dbReference type="InterPro" id="IPR036603">
    <property type="entry name" value="RBP11-like"/>
</dbReference>
<dbReference type="InterPro" id="IPR011260">
    <property type="entry name" value="RNAP_asu_C"/>
</dbReference>
<dbReference type="InterPro" id="IPR036643">
    <property type="entry name" value="RNApol_insert_sf"/>
</dbReference>
<dbReference type="NCBIfam" id="NF003513">
    <property type="entry name" value="PRK05182.1-2"/>
    <property type="match status" value="1"/>
</dbReference>
<dbReference type="NCBIfam" id="NF003519">
    <property type="entry name" value="PRK05182.2-5"/>
    <property type="match status" value="1"/>
</dbReference>
<dbReference type="NCBIfam" id="TIGR02027">
    <property type="entry name" value="rpoA"/>
    <property type="match status" value="1"/>
</dbReference>
<dbReference type="Pfam" id="PF01000">
    <property type="entry name" value="RNA_pol_A_bac"/>
    <property type="match status" value="1"/>
</dbReference>
<dbReference type="Pfam" id="PF03118">
    <property type="entry name" value="RNA_pol_A_CTD"/>
    <property type="match status" value="1"/>
</dbReference>
<dbReference type="Pfam" id="PF01193">
    <property type="entry name" value="RNA_pol_L"/>
    <property type="match status" value="1"/>
</dbReference>
<dbReference type="SMART" id="SM00662">
    <property type="entry name" value="RPOLD"/>
    <property type="match status" value="1"/>
</dbReference>
<dbReference type="SUPFAM" id="SSF47789">
    <property type="entry name" value="C-terminal domain of RNA polymerase alpha subunit"/>
    <property type="match status" value="1"/>
</dbReference>
<dbReference type="SUPFAM" id="SSF56553">
    <property type="entry name" value="Insert subdomain of RNA polymerase alpha subunit"/>
    <property type="match status" value="1"/>
</dbReference>
<dbReference type="SUPFAM" id="SSF55257">
    <property type="entry name" value="RBP11-like subunits of RNA polymerase"/>
    <property type="match status" value="1"/>
</dbReference>
<evidence type="ECO:0000255" key="1">
    <source>
        <dbReference type="HAMAP-Rule" id="MF_00059"/>
    </source>
</evidence>
<gene>
    <name evidence="1" type="primary">rpoA</name>
    <name type="ordered locus">mma_3385</name>
</gene>
<proteinExistence type="inferred from homology"/>
<sequence>MQNSLLKPRIIEVEVLGAGHAKVVMEPFERGYGHTLGNALRRVLLSSMVGYAPTEVTIAGVVHEYSSLDGVQEDVVDLLLNLKGVVFKLHNRDDVTLTLKKDGEGAVLASDIELPHDVELVNPDHVIAHLTAGGKLDMQIKVEKGRGYVPGNVRRLSEDTNKTIGRIILDASFSPVRRVSYAVESARVEQRTDLDKLVINIETNGVISPEEAIRQSARVLVDQLNVFAALEGTEAPADAPSRAPAVDPILLRPVDDLELTVRSANCLKAENIYYIGDLIQRSENELLKTPNLGRKSLNEIKEVLASRGLTLGMKLENWPPAGLEK</sequence>
<accession>A6T3H8</accession>
<organism>
    <name type="scientific">Janthinobacterium sp. (strain Marseille)</name>
    <name type="common">Minibacterium massiliensis</name>
    <dbReference type="NCBI Taxonomy" id="375286"/>
    <lineage>
        <taxon>Bacteria</taxon>
        <taxon>Pseudomonadati</taxon>
        <taxon>Pseudomonadota</taxon>
        <taxon>Betaproteobacteria</taxon>
        <taxon>Burkholderiales</taxon>
        <taxon>Oxalobacteraceae</taxon>
        <taxon>Janthinobacterium</taxon>
    </lineage>
</organism>
<feature type="chain" id="PRO_1000007687" description="DNA-directed RNA polymerase subunit alpha">
    <location>
        <begin position="1"/>
        <end position="325"/>
    </location>
</feature>
<feature type="region of interest" description="Alpha N-terminal domain (alpha-NTD)" evidence="1">
    <location>
        <begin position="1"/>
        <end position="231"/>
    </location>
</feature>
<feature type="region of interest" description="Alpha C-terminal domain (alpha-CTD)" evidence="1">
    <location>
        <begin position="246"/>
        <end position="325"/>
    </location>
</feature>
<protein>
    <recommendedName>
        <fullName evidence="1">DNA-directed RNA polymerase subunit alpha</fullName>
        <shortName evidence="1">RNAP subunit alpha</shortName>
        <ecNumber evidence="1">2.7.7.6</ecNumber>
    </recommendedName>
    <alternativeName>
        <fullName evidence="1">RNA polymerase subunit alpha</fullName>
    </alternativeName>
    <alternativeName>
        <fullName evidence="1">Transcriptase subunit alpha</fullName>
    </alternativeName>
</protein>
<name>RPOA_JANMA</name>